<name>F10C1_RAT</name>
<comment type="function">
    <text evidence="1">May be involved in pre-mRNA splicing.</text>
</comment>
<comment type="subunit">
    <text evidence="1">Interacts with ESS2.</text>
</comment>
<comment type="subcellular location">
    <subcellularLocation>
        <location evidence="1">Nucleus</location>
    </subcellularLocation>
</comment>
<keyword id="KW-0007">Acetylation</keyword>
<keyword id="KW-0539">Nucleus</keyword>
<keyword id="KW-0597">Phosphoprotein</keyword>
<keyword id="KW-1185">Reference proteome</keyword>
<protein>
    <recommendedName>
        <fullName>Protein FRA10AC1 homolog</fullName>
    </recommendedName>
</protein>
<proteinExistence type="evidence at protein level"/>
<reference key="1">
    <citation type="journal article" date="2004" name="Genome Res.">
        <title>The status, quality, and expansion of the NIH full-length cDNA project: the Mammalian Gene Collection (MGC).</title>
        <authorList>
            <consortium name="The MGC Project Team"/>
        </authorList>
    </citation>
    <scope>NUCLEOTIDE SEQUENCE [LARGE SCALE MRNA]</scope>
    <source>
        <tissue>Spleen</tissue>
    </source>
</reference>
<reference key="2">
    <citation type="journal article" date="2012" name="Nat. Commun.">
        <title>Quantitative maps of protein phosphorylation sites across 14 different rat organs and tissues.</title>
        <authorList>
            <person name="Lundby A."/>
            <person name="Secher A."/>
            <person name="Lage K."/>
            <person name="Nordsborg N.B."/>
            <person name="Dmytriyev A."/>
            <person name="Lundby C."/>
            <person name="Olsen J.V."/>
        </authorList>
    </citation>
    <scope>PHOSPHORYLATION [LARGE SCALE ANALYSIS] AT SER-9 AND SER-12</scope>
    <scope>IDENTIFICATION BY MASS SPECTROMETRY [LARGE SCALE ANALYSIS]</scope>
</reference>
<dbReference type="EMBL" id="BC090036">
    <property type="protein sequence ID" value="AAH90036.1"/>
    <property type="molecule type" value="mRNA"/>
</dbReference>
<dbReference type="RefSeq" id="NP_001014268.1">
    <property type="nucleotide sequence ID" value="NM_001014246.1"/>
</dbReference>
<dbReference type="FunCoup" id="Q5FVF1">
    <property type="interactions" value="1370"/>
</dbReference>
<dbReference type="STRING" id="10116.ENSRNOP00000020620"/>
<dbReference type="CarbonylDB" id="Q5FVF1"/>
<dbReference type="iPTMnet" id="Q5FVF1"/>
<dbReference type="PhosphoSitePlus" id="Q5FVF1"/>
<dbReference type="PaxDb" id="10116-ENSRNOP00000020620"/>
<dbReference type="GeneID" id="365458"/>
<dbReference type="KEGG" id="rno:365458"/>
<dbReference type="UCSC" id="RGD:1309482">
    <property type="organism name" value="rat"/>
</dbReference>
<dbReference type="AGR" id="RGD:1309482"/>
<dbReference type="CTD" id="118924"/>
<dbReference type="RGD" id="1309482">
    <property type="gene designation" value="Fra10ac1"/>
</dbReference>
<dbReference type="VEuPathDB" id="HostDB:ENSRNOG00000015235"/>
<dbReference type="eggNOG" id="KOG1297">
    <property type="taxonomic scope" value="Eukaryota"/>
</dbReference>
<dbReference type="HOGENOM" id="CLU_061714_0_1_1"/>
<dbReference type="InParanoid" id="Q5FVF1"/>
<dbReference type="OrthoDB" id="197967at2759"/>
<dbReference type="PhylomeDB" id="Q5FVF1"/>
<dbReference type="TreeFam" id="TF323667"/>
<dbReference type="PRO" id="PR:Q5FVF1"/>
<dbReference type="Proteomes" id="UP000002494">
    <property type="component" value="Chromosome 1"/>
</dbReference>
<dbReference type="Bgee" id="ENSRNOG00000015235">
    <property type="expression patterns" value="Expressed in pancreas and 20 other cell types or tissues"/>
</dbReference>
<dbReference type="GO" id="GO:0005634">
    <property type="term" value="C:nucleus"/>
    <property type="evidence" value="ECO:0000250"/>
    <property type="project" value="UniProtKB"/>
</dbReference>
<dbReference type="GO" id="GO:0016791">
    <property type="term" value="F:phosphatase activity"/>
    <property type="evidence" value="ECO:0000318"/>
    <property type="project" value="GO_Central"/>
</dbReference>
<dbReference type="GO" id="GO:0000398">
    <property type="term" value="P:mRNA splicing, via spliceosome"/>
    <property type="evidence" value="ECO:0000250"/>
    <property type="project" value="UniProtKB"/>
</dbReference>
<dbReference type="InterPro" id="IPR019129">
    <property type="entry name" value="Folate-sensitive_fs_Fra10Ac1"/>
</dbReference>
<dbReference type="InterPro" id="IPR050645">
    <property type="entry name" value="Histidine_acid_phosphatase"/>
</dbReference>
<dbReference type="PANTHER" id="PTHR11567">
    <property type="entry name" value="ACID PHOSPHATASE-RELATED"/>
    <property type="match status" value="1"/>
</dbReference>
<dbReference type="PANTHER" id="PTHR11567:SF25">
    <property type="entry name" value="PROTEIN FRA10AC1"/>
    <property type="match status" value="1"/>
</dbReference>
<dbReference type="Pfam" id="PF09725">
    <property type="entry name" value="Fra10Ac1"/>
    <property type="match status" value="1"/>
</dbReference>
<organism>
    <name type="scientific">Rattus norvegicus</name>
    <name type="common">Rat</name>
    <dbReference type="NCBI Taxonomy" id="10116"/>
    <lineage>
        <taxon>Eukaryota</taxon>
        <taxon>Metazoa</taxon>
        <taxon>Chordata</taxon>
        <taxon>Craniata</taxon>
        <taxon>Vertebrata</taxon>
        <taxon>Euteleostomi</taxon>
        <taxon>Mammalia</taxon>
        <taxon>Eutheria</taxon>
        <taxon>Euarchontoglires</taxon>
        <taxon>Glires</taxon>
        <taxon>Rodentia</taxon>
        <taxon>Myomorpha</taxon>
        <taxon>Muroidea</taxon>
        <taxon>Muridae</taxon>
        <taxon>Murinae</taxon>
        <taxon>Rattus</taxon>
    </lineage>
</organism>
<evidence type="ECO:0000250" key="1">
    <source>
        <dbReference type="UniProtKB" id="Q70Z53"/>
    </source>
</evidence>
<evidence type="ECO:0000250" key="2">
    <source>
        <dbReference type="UniProtKB" id="Q8BP78"/>
    </source>
</evidence>
<evidence type="ECO:0000256" key="3">
    <source>
        <dbReference type="SAM" id="MobiDB-lite"/>
    </source>
</evidence>
<evidence type="ECO:0007744" key="4">
    <source>
    </source>
</evidence>
<gene>
    <name type="primary">Fra10ac1</name>
</gene>
<accession>Q5FVF1</accession>
<feature type="chain" id="PRO_0000087150" description="Protein FRA10AC1 homolog">
    <location>
        <begin position="1"/>
        <end position="315"/>
    </location>
</feature>
<feature type="region of interest" description="Disordered" evidence="3">
    <location>
        <begin position="1"/>
        <end position="28"/>
    </location>
</feature>
<feature type="region of interest" description="Disordered" evidence="3">
    <location>
        <begin position="225"/>
        <end position="308"/>
    </location>
</feature>
<feature type="compositionally biased region" description="Basic residues" evidence="3">
    <location>
        <begin position="225"/>
        <end position="235"/>
    </location>
</feature>
<feature type="compositionally biased region" description="Basic and acidic residues" evidence="3">
    <location>
        <begin position="236"/>
        <end position="245"/>
    </location>
</feature>
<feature type="compositionally biased region" description="Basic and acidic residues" evidence="3">
    <location>
        <begin position="257"/>
        <end position="279"/>
    </location>
</feature>
<feature type="modified residue" description="N-acetylmethionine" evidence="1">
    <location>
        <position position="1"/>
    </location>
</feature>
<feature type="modified residue" description="Phosphoserine" evidence="4">
    <location>
        <position position="9"/>
    </location>
</feature>
<feature type="modified residue" description="Phosphoserine" evidence="4">
    <location>
        <position position="12"/>
    </location>
</feature>
<feature type="modified residue" description="N6-acetyllysine" evidence="2">
    <location>
        <position position="36"/>
    </location>
</feature>
<feature type="modified residue" description="Phosphoserine" evidence="1">
    <location>
        <position position="251"/>
    </location>
</feature>
<feature type="modified residue" description="Phosphoserine" evidence="1">
    <location>
        <position position="252"/>
    </location>
</feature>
<feature type="modified residue" description="Phosphoserine" evidence="2">
    <location>
        <position position="283"/>
    </location>
</feature>
<feature type="modified residue" description="Phosphoserine" evidence="2">
    <location>
        <position position="285"/>
    </location>
</feature>
<sequence length="315" mass="37119">MHGHGGYDSDFSDDEQGGGSSKKRKKTVEDELLLTKPFQKEKYGKVAHKQVAADLLDREEARNRRFHLIAMDAYQRHTKFVNDYILYYGGKREDFKRLGENDKTDLDVIRENHRFLWNEEDEADMTWEKRLAKKYYDKLFKEYCIADLSRYKENKFGFRWRIEKEVISGKGQFFCGNKCCDEKEGLKSWEVNFGYTEHGEKRNALVKLRLCQECSFKLNFHHRRKEIKSTKKRSKTKTESDESPHKNSRSSSSEEASQGKDEGHSSSKRSEDSRNRNAGEEDSASDSELWKGPLPETDEKSQEEEFDDYFQDLFL</sequence>